<keyword id="KW-0235">DNA replication</keyword>
<keyword id="KW-0238">DNA-binding</keyword>
<keyword id="KW-0240">DNA-directed RNA polymerase</keyword>
<keyword id="KW-0460">Magnesium</keyword>
<keyword id="KW-0479">Metal-binding</keyword>
<keyword id="KW-0548">Nucleotidyltransferase</keyword>
<keyword id="KW-0639">Primosome</keyword>
<keyword id="KW-0804">Transcription</keyword>
<keyword id="KW-0808">Transferase</keyword>
<keyword id="KW-0862">Zinc</keyword>
<keyword id="KW-0863">Zinc-finger</keyword>
<accession>Q5HFJ8</accession>
<organism>
    <name type="scientific">Staphylococcus aureus (strain COL)</name>
    <dbReference type="NCBI Taxonomy" id="93062"/>
    <lineage>
        <taxon>Bacteria</taxon>
        <taxon>Bacillati</taxon>
        <taxon>Bacillota</taxon>
        <taxon>Bacilli</taxon>
        <taxon>Bacillales</taxon>
        <taxon>Staphylococcaceae</taxon>
        <taxon>Staphylococcus</taxon>
    </lineage>
</organism>
<reference key="1">
    <citation type="journal article" date="2005" name="J. Bacteriol.">
        <title>Insights on evolution of virulence and resistance from the complete genome analysis of an early methicillin-resistant Staphylococcus aureus strain and a biofilm-producing methicillin-resistant Staphylococcus epidermidis strain.</title>
        <authorList>
            <person name="Gill S.R."/>
            <person name="Fouts D.E."/>
            <person name="Archer G.L."/>
            <person name="Mongodin E.F."/>
            <person name="DeBoy R.T."/>
            <person name="Ravel J."/>
            <person name="Paulsen I.T."/>
            <person name="Kolonay J.F."/>
            <person name="Brinkac L.M."/>
            <person name="Beanan M.J."/>
            <person name="Dodson R.J."/>
            <person name="Daugherty S.C."/>
            <person name="Madupu R."/>
            <person name="Angiuoli S.V."/>
            <person name="Durkin A.S."/>
            <person name="Haft D.H."/>
            <person name="Vamathevan J.J."/>
            <person name="Khouri H."/>
            <person name="Utterback T.R."/>
            <person name="Lee C."/>
            <person name="Dimitrov G."/>
            <person name="Jiang L."/>
            <person name="Qin H."/>
            <person name="Weidman J."/>
            <person name="Tran K."/>
            <person name="Kang K.H."/>
            <person name="Hance I.R."/>
            <person name="Nelson K.E."/>
            <person name="Fraser C.M."/>
        </authorList>
    </citation>
    <scope>NUCLEOTIDE SEQUENCE [LARGE SCALE GENOMIC DNA]</scope>
    <source>
        <strain>COL</strain>
    </source>
</reference>
<dbReference type="EC" id="2.7.7.101" evidence="1"/>
<dbReference type="EMBL" id="CP000046">
    <property type="protein sequence ID" value="AAW38235.1"/>
    <property type="molecule type" value="Genomic_DNA"/>
</dbReference>
<dbReference type="RefSeq" id="WP_001217261.1">
    <property type="nucleotide sequence ID" value="NZ_JBGOFO010000003.1"/>
</dbReference>
<dbReference type="BMRB" id="Q5HFJ8"/>
<dbReference type="SMR" id="Q5HFJ8"/>
<dbReference type="KEGG" id="sac:SACOL1619"/>
<dbReference type="HOGENOM" id="CLU_013501_3_3_9"/>
<dbReference type="Proteomes" id="UP000000530">
    <property type="component" value="Chromosome"/>
</dbReference>
<dbReference type="GO" id="GO:0005737">
    <property type="term" value="C:cytoplasm"/>
    <property type="evidence" value="ECO:0007669"/>
    <property type="project" value="TreeGrafter"/>
</dbReference>
<dbReference type="GO" id="GO:0000428">
    <property type="term" value="C:DNA-directed RNA polymerase complex"/>
    <property type="evidence" value="ECO:0007669"/>
    <property type="project" value="UniProtKB-KW"/>
</dbReference>
<dbReference type="GO" id="GO:1990077">
    <property type="term" value="C:primosome complex"/>
    <property type="evidence" value="ECO:0007669"/>
    <property type="project" value="UniProtKB-KW"/>
</dbReference>
<dbReference type="GO" id="GO:0005524">
    <property type="term" value="F:ATP binding"/>
    <property type="evidence" value="ECO:0007669"/>
    <property type="project" value="InterPro"/>
</dbReference>
<dbReference type="GO" id="GO:0003677">
    <property type="term" value="F:DNA binding"/>
    <property type="evidence" value="ECO:0007669"/>
    <property type="project" value="UniProtKB-KW"/>
</dbReference>
<dbReference type="GO" id="GO:0003678">
    <property type="term" value="F:DNA helicase activity"/>
    <property type="evidence" value="ECO:0007669"/>
    <property type="project" value="InterPro"/>
</dbReference>
<dbReference type="GO" id="GO:0003899">
    <property type="term" value="F:DNA-directed RNA polymerase activity"/>
    <property type="evidence" value="ECO:0007669"/>
    <property type="project" value="InterPro"/>
</dbReference>
<dbReference type="GO" id="GO:0008270">
    <property type="term" value="F:zinc ion binding"/>
    <property type="evidence" value="ECO:0007669"/>
    <property type="project" value="UniProtKB-UniRule"/>
</dbReference>
<dbReference type="GO" id="GO:0006269">
    <property type="term" value="P:DNA replication, synthesis of primer"/>
    <property type="evidence" value="ECO:0007669"/>
    <property type="project" value="UniProtKB-UniRule"/>
</dbReference>
<dbReference type="CDD" id="cd03364">
    <property type="entry name" value="TOPRIM_DnaG_primases"/>
    <property type="match status" value="1"/>
</dbReference>
<dbReference type="FunFam" id="3.90.580.10:FF:000001">
    <property type="entry name" value="DNA primase"/>
    <property type="match status" value="1"/>
</dbReference>
<dbReference type="FunFam" id="3.90.980.10:FF:000001">
    <property type="entry name" value="DNA primase"/>
    <property type="match status" value="1"/>
</dbReference>
<dbReference type="Gene3D" id="3.40.1360.10">
    <property type="match status" value="1"/>
</dbReference>
<dbReference type="Gene3D" id="3.90.980.10">
    <property type="entry name" value="DNA primase, catalytic core, N-terminal domain"/>
    <property type="match status" value="1"/>
</dbReference>
<dbReference type="Gene3D" id="1.10.860.10">
    <property type="entry name" value="DNAb Helicase, Chain A"/>
    <property type="match status" value="1"/>
</dbReference>
<dbReference type="Gene3D" id="1.20.50.20">
    <property type="entry name" value="DnaG, RNA polymerase domain, helical bundle"/>
    <property type="match status" value="1"/>
</dbReference>
<dbReference type="Gene3D" id="3.90.580.10">
    <property type="entry name" value="Zinc finger, CHC2-type domain"/>
    <property type="match status" value="1"/>
</dbReference>
<dbReference type="HAMAP" id="MF_00974">
    <property type="entry name" value="DNA_primase_DnaG"/>
    <property type="match status" value="1"/>
</dbReference>
<dbReference type="InterPro" id="IPR036185">
    <property type="entry name" value="DNA_heli_DnaB-like_N_sf"/>
</dbReference>
<dbReference type="InterPro" id="IPR016136">
    <property type="entry name" value="DNA_helicase_N/primase_C"/>
</dbReference>
<dbReference type="InterPro" id="IPR037068">
    <property type="entry name" value="DNA_primase_core_N_sf"/>
</dbReference>
<dbReference type="InterPro" id="IPR006295">
    <property type="entry name" value="DNA_primase_DnaG"/>
</dbReference>
<dbReference type="InterPro" id="IPR036977">
    <property type="entry name" value="DNA_primase_Znf_CHC2"/>
</dbReference>
<dbReference type="InterPro" id="IPR030846">
    <property type="entry name" value="DnaG_bac"/>
</dbReference>
<dbReference type="InterPro" id="IPR048453">
    <property type="entry name" value="DnaG_cat_HB"/>
</dbReference>
<dbReference type="InterPro" id="IPR013264">
    <property type="entry name" value="DNAG_N"/>
</dbReference>
<dbReference type="InterPro" id="IPR050219">
    <property type="entry name" value="DnaG_primase"/>
</dbReference>
<dbReference type="InterPro" id="IPR034151">
    <property type="entry name" value="TOPRIM_DnaG_bac"/>
</dbReference>
<dbReference type="InterPro" id="IPR006171">
    <property type="entry name" value="TOPRIM_dom"/>
</dbReference>
<dbReference type="InterPro" id="IPR002694">
    <property type="entry name" value="Znf_CHC2"/>
</dbReference>
<dbReference type="NCBIfam" id="TIGR01391">
    <property type="entry name" value="dnaG"/>
    <property type="match status" value="1"/>
</dbReference>
<dbReference type="PANTHER" id="PTHR30313">
    <property type="entry name" value="DNA PRIMASE"/>
    <property type="match status" value="1"/>
</dbReference>
<dbReference type="PANTHER" id="PTHR30313:SF2">
    <property type="entry name" value="DNA PRIMASE"/>
    <property type="match status" value="1"/>
</dbReference>
<dbReference type="Pfam" id="PF21650">
    <property type="entry name" value="DnaG_cat_HB"/>
    <property type="match status" value="1"/>
</dbReference>
<dbReference type="Pfam" id="PF08275">
    <property type="entry name" value="DNAG_N"/>
    <property type="match status" value="1"/>
</dbReference>
<dbReference type="Pfam" id="PF13155">
    <property type="entry name" value="Toprim_2"/>
    <property type="match status" value="1"/>
</dbReference>
<dbReference type="Pfam" id="PF01807">
    <property type="entry name" value="Zn_ribbon_DnaG"/>
    <property type="match status" value="1"/>
</dbReference>
<dbReference type="PIRSF" id="PIRSF002811">
    <property type="entry name" value="DnaG"/>
    <property type="match status" value="1"/>
</dbReference>
<dbReference type="SMART" id="SM00493">
    <property type="entry name" value="TOPRIM"/>
    <property type="match status" value="1"/>
</dbReference>
<dbReference type="SMART" id="SM00400">
    <property type="entry name" value="ZnF_CHCC"/>
    <property type="match status" value="1"/>
</dbReference>
<dbReference type="SUPFAM" id="SSF56731">
    <property type="entry name" value="DNA primase core"/>
    <property type="match status" value="1"/>
</dbReference>
<dbReference type="SUPFAM" id="SSF48024">
    <property type="entry name" value="N-terminal domain of DnaB helicase"/>
    <property type="match status" value="1"/>
</dbReference>
<dbReference type="SUPFAM" id="SSF57783">
    <property type="entry name" value="Zinc beta-ribbon"/>
    <property type="match status" value="1"/>
</dbReference>
<dbReference type="PROSITE" id="PS50880">
    <property type="entry name" value="TOPRIM"/>
    <property type="match status" value="1"/>
</dbReference>
<sequence length="599" mass="69294">MRIDQSIINEIKDKTDILDLVSEYVKLEKRGRNYIGLCPFHDEKTPSFTVSEDKQICHCFGCKKGGNVFQFTQEIKDISFVEAVKELGDRVNVAVDIEATQSNSNVQIASDDLQMIEMHELIQEFYYYALTKTVEGEQALTYLQERGFTDALIKERGIGFAPDSSHFCHDFLQKKGYDIELAYEAGLLSRNEENFSYYDRFRNRIMFPLKNAQGRIVGYSGRTYTGQEPKYLNSPETPIFQKRKLLYNLDKARKSIRKLDEIVLLEGFMDVIKSDTAGLKNVVATMGTQLSDEHITFIRKLTSNITLMFDGDFAGSEATLKTGQNLLQQGLNVFVIQLPSGMDPDEYIGKYGNDAFTAFVKNDKKSFAHYKVSILKDEIAHNDLSYERYLKELSHDISLMKSSILQQKALNDVAPFFNVSPEQLANEIQFNQAPANYYPEDEYGGYIEPEPIGMAQFDNLSRQEKAERAFLKHLMRDKDTFLNYYESVDKDNFTNQHFKYVFEVLHDFYAENDQYNISDAVQYVNSNELRETLISLEQYNLNDEPYENEIDDYVNVINEKGQETIESLNHKLREATRIGDVELQKYYLQQIVAKNKERM</sequence>
<protein>
    <recommendedName>
        <fullName evidence="1">DNA primase</fullName>
        <ecNumber evidence="1">2.7.7.101</ecNumber>
    </recommendedName>
</protein>
<name>DNAG_STAAC</name>
<comment type="function">
    <text evidence="1">RNA polymerase that catalyzes the synthesis of short RNA molecules used as primers for DNA polymerase during DNA replication.</text>
</comment>
<comment type="catalytic activity">
    <reaction evidence="1">
        <text>ssDNA + n NTP = ssDNA/pppN(pN)n-1 hybrid + (n-1) diphosphate.</text>
        <dbReference type="EC" id="2.7.7.101"/>
    </reaction>
</comment>
<comment type="cofactor">
    <cofactor evidence="1">
        <name>Zn(2+)</name>
        <dbReference type="ChEBI" id="CHEBI:29105"/>
    </cofactor>
    <text evidence="1">Binds 1 zinc ion per monomer.</text>
</comment>
<comment type="cofactor">
    <cofactor evidence="1">
        <name>Mg(2+)</name>
        <dbReference type="ChEBI" id="CHEBI:18420"/>
    </cofactor>
    <text evidence="1">Binds two Mg(2+) per subunit.</text>
</comment>
<comment type="subunit">
    <text evidence="1">Monomer. Interacts with DnaB.</text>
</comment>
<comment type="domain">
    <text evidence="1">Contains an N-terminal zinc-binding domain, a central core domain that contains the primase activity, and a C-terminal DnaB-binding domain.</text>
</comment>
<comment type="similarity">
    <text evidence="1">Belongs to the DnaG primase family.</text>
</comment>
<gene>
    <name evidence="1" type="primary">dnaG</name>
    <name type="ordered locus">SACOL1619</name>
</gene>
<proteinExistence type="inferred from homology"/>
<evidence type="ECO:0000255" key="1">
    <source>
        <dbReference type="HAMAP-Rule" id="MF_00974"/>
    </source>
</evidence>
<feature type="chain" id="PRO_0000180518" description="DNA primase">
    <location>
        <begin position="1"/>
        <end position="599"/>
    </location>
</feature>
<feature type="domain" description="Toprim" evidence="1">
    <location>
        <begin position="260"/>
        <end position="341"/>
    </location>
</feature>
<feature type="zinc finger region" description="CHC2-type" evidence="1">
    <location>
        <begin position="38"/>
        <end position="62"/>
    </location>
</feature>
<feature type="binding site" evidence="1">
    <location>
        <position position="266"/>
    </location>
    <ligand>
        <name>Mg(2+)</name>
        <dbReference type="ChEBI" id="CHEBI:18420"/>
        <label>1</label>
        <note>catalytic</note>
    </ligand>
</feature>
<feature type="binding site" evidence="1">
    <location>
        <position position="310"/>
    </location>
    <ligand>
        <name>Mg(2+)</name>
        <dbReference type="ChEBI" id="CHEBI:18420"/>
        <label>1</label>
        <note>catalytic</note>
    </ligand>
</feature>
<feature type="binding site" evidence="1">
    <location>
        <position position="310"/>
    </location>
    <ligand>
        <name>Mg(2+)</name>
        <dbReference type="ChEBI" id="CHEBI:18420"/>
        <label>2</label>
    </ligand>
</feature>
<feature type="binding site" evidence="1">
    <location>
        <position position="312"/>
    </location>
    <ligand>
        <name>Mg(2+)</name>
        <dbReference type="ChEBI" id="CHEBI:18420"/>
        <label>2</label>
    </ligand>
</feature>